<proteinExistence type="inferred from homology"/>
<keyword id="KW-0028">Amino-acid biosynthesis</keyword>
<keyword id="KW-0057">Aromatic amino acid biosynthesis</keyword>
<keyword id="KW-0274">FAD</keyword>
<keyword id="KW-0285">Flavoprotein</keyword>
<keyword id="KW-0288">FMN</keyword>
<keyword id="KW-0456">Lyase</keyword>
<keyword id="KW-0521">NADP</keyword>
<evidence type="ECO:0000255" key="1">
    <source>
        <dbReference type="HAMAP-Rule" id="MF_00300"/>
    </source>
</evidence>
<organism>
    <name type="scientific">Streptococcus pyogenes serotype M49 (strain NZ131)</name>
    <dbReference type="NCBI Taxonomy" id="471876"/>
    <lineage>
        <taxon>Bacteria</taxon>
        <taxon>Bacillati</taxon>
        <taxon>Bacillota</taxon>
        <taxon>Bacilli</taxon>
        <taxon>Lactobacillales</taxon>
        <taxon>Streptococcaceae</taxon>
        <taxon>Streptococcus</taxon>
    </lineage>
</organism>
<feature type="chain" id="PRO_1000115407" description="Chorismate synthase">
    <location>
        <begin position="1"/>
        <end position="388"/>
    </location>
</feature>
<feature type="binding site" evidence="1">
    <location>
        <position position="39"/>
    </location>
    <ligand>
        <name>NADP(+)</name>
        <dbReference type="ChEBI" id="CHEBI:58349"/>
    </ligand>
</feature>
<feature type="binding site" evidence="1">
    <location>
        <position position="45"/>
    </location>
    <ligand>
        <name>NADP(+)</name>
        <dbReference type="ChEBI" id="CHEBI:58349"/>
    </ligand>
</feature>
<feature type="binding site" evidence="1">
    <location>
        <begin position="130"/>
        <end position="132"/>
    </location>
    <ligand>
        <name>FMN</name>
        <dbReference type="ChEBI" id="CHEBI:58210"/>
    </ligand>
</feature>
<feature type="binding site" evidence="1">
    <location>
        <begin position="251"/>
        <end position="252"/>
    </location>
    <ligand>
        <name>FMN</name>
        <dbReference type="ChEBI" id="CHEBI:58210"/>
    </ligand>
</feature>
<feature type="binding site" evidence="1">
    <location>
        <position position="296"/>
    </location>
    <ligand>
        <name>FMN</name>
        <dbReference type="ChEBI" id="CHEBI:58210"/>
    </ligand>
</feature>
<feature type="binding site" evidence="1">
    <location>
        <begin position="311"/>
        <end position="315"/>
    </location>
    <ligand>
        <name>FMN</name>
        <dbReference type="ChEBI" id="CHEBI:58210"/>
    </ligand>
</feature>
<feature type="binding site" evidence="1">
    <location>
        <position position="337"/>
    </location>
    <ligand>
        <name>FMN</name>
        <dbReference type="ChEBI" id="CHEBI:58210"/>
    </ligand>
</feature>
<dbReference type="EC" id="4.2.3.5" evidence="1"/>
<dbReference type="EMBL" id="CP000829">
    <property type="protein sequence ID" value="ACI60956.1"/>
    <property type="molecule type" value="Genomic_DNA"/>
</dbReference>
<dbReference type="SMR" id="B5XKU4"/>
<dbReference type="KEGG" id="soz:Spy49_0635"/>
<dbReference type="HOGENOM" id="CLU_034547_2_0_9"/>
<dbReference type="UniPathway" id="UPA00053">
    <property type="reaction ID" value="UER00090"/>
</dbReference>
<dbReference type="Proteomes" id="UP000001039">
    <property type="component" value="Chromosome"/>
</dbReference>
<dbReference type="GO" id="GO:0005829">
    <property type="term" value="C:cytosol"/>
    <property type="evidence" value="ECO:0007669"/>
    <property type="project" value="TreeGrafter"/>
</dbReference>
<dbReference type="GO" id="GO:0004107">
    <property type="term" value="F:chorismate synthase activity"/>
    <property type="evidence" value="ECO:0007669"/>
    <property type="project" value="UniProtKB-UniRule"/>
</dbReference>
<dbReference type="GO" id="GO:0010181">
    <property type="term" value="F:FMN binding"/>
    <property type="evidence" value="ECO:0007669"/>
    <property type="project" value="TreeGrafter"/>
</dbReference>
<dbReference type="GO" id="GO:0008652">
    <property type="term" value="P:amino acid biosynthetic process"/>
    <property type="evidence" value="ECO:0007669"/>
    <property type="project" value="UniProtKB-KW"/>
</dbReference>
<dbReference type="GO" id="GO:0009073">
    <property type="term" value="P:aromatic amino acid family biosynthetic process"/>
    <property type="evidence" value="ECO:0007669"/>
    <property type="project" value="UniProtKB-KW"/>
</dbReference>
<dbReference type="GO" id="GO:0009423">
    <property type="term" value="P:chorismate biosynthetic process"/>
    <property type="evidence" value="ECO:0007669"/>
    <property type="project" value="UniProtKB-UniRule"/>
</dbReference>
<dbReference type="CDD" id="cd07304">
    <property type="entry name" value="Chorismate_synthase"/>
    <property type="match status" value="1"/>
</dbReference>
<dbReference type="FunFam" id="3.60.150.10:FF:000002">
    <property type="entry name" value="Chorismate synthase"/>
    <property type="match status" value="1"/>
</dbReference>
<dbReference type="Gene3D" id="3.60.150.10">
    <property type="entry name" value="Chorismate synthase AroC"/>
    <property type="match status" value="1"/>
</dbReference>
<dbReference type="HAMAP" id="MF_00300">
    <property type="entry name" value="Chorismate_synth"/>
    <property type="match status" value="1"/>
</dbReference>
<dbReference type="InterPro" id="IPR000453">
    <property type="entry name" value="Chorismate_synth"/>
</dbReference>
<dbReference type="InterPro" id="IPR035904">
    <property type="entry name" value="Chorismate_synth_AroC_sf"/>
</dbReference>
<dbReference type="InterPro" id="IPR020541">
    <property type="entry name" value="Chorismate_synthase_CS"/>
</dbReference>
<dbReference type="NCBIfam" id="TIGR00033">
    <property type="entry name" value="aroC"/>
    <property type="match status" value="1"/>
</dbReference>
<dbReference type="NCBIfam" id="NF003793">
    <property type="entry name" value="PRK05382.1"/>
    <property type="match status" value="1"/>
</dbReference>
<dbReference type="PANTHER" id="PTHR21085">
    <property type="entry name" value="CHORISMATE SYNTHASE"/>
    <property type="match status" value="1"/>
</dbReference>
<dbReference type="PANTHER" id="PTHR21085:SF0">
    <property type="entry name" value="CHORISMATE SYNTHASE"/>
    <property type="match status" value="1"/>
</dbReference>
<dbReference type="Pfam" id="PF01264">
    <property type="entry name" value="Chorismate_synt"/>
    <property type="match status" value="1"/>
</dbReference>
<dbReference type="PIRSF" id="PIRSF001456">
    <property type="entry name" value="Chorismate_synth"/>
    <property type="match status" value="1"/>
</dbReference>
<dbReference type="SUPFAM" id="SSF103263">
    <property type="entry name" value="Chorismate synthase, AroC"/>
    <property type="match status" value="1"/>
</dbReference>
<dbReference type="PROSITE" id="PS00787">
    <property type="entry name" value="CHORISMATE_SYNTHASE_1"/>
    <property type="match status" value="1"/>
</dbReference>
<dbReference type="PROSITE" id="PS00788">
    <property type="entry name" value="CHORISMATE_SYNTHASE_2"/>
    <property type="match status" value="1"/>
</dbReference>
<dbReference type="PROSITE" id="PS00789">
    <property type="entry name" value="CHORISMATE_SYNTHASE_3"/>
    <property type="match status" value="1"/>
</dbReference>
<protein>
    <recommendedName>
        <fullName evidence="1">Chorismate synthase</fullName>
        <shortName evidence="1">CS</shortName>
        <ecNumber evidence="1">4.2.3.5</ecNumber>
    </recommendedName>
    <alternativeName>
        <fullName evidence="1">5-enolpyruvylshikimate-3-phosphate phospholyase</fullName>
    </alternativeName>
</protein>
<name>AROC_STRPZ</name>
<reference key="1">
    <citation type="journal article" date="2008" name="J. Bacteriol.">
        <title>Genome sequence of a nephritogenic and highly transformable M49 strain of Streptococcus pyogenes.</title>
        <authorList>
            <person name="McShan W.M."/>
            <person name="Ferretti J.J."/>
            <person name="Karasawa T."/>
            <person name="Suvorov A.N."/>
            <person name="Lin S."/>
            <person name="Qin B."/>
            <person name="Jia H."/>
            <person name="Kenton S."/>
            <person name="Najar F."/>
            <person name="Wu H."/>
            <person name="Scott J."/>
            <person name="Roe B.A."/>
            <person name="Savic D.J."/>
        </authorList>
    </citation>
    <scope>NUCLEOTIDE SEQUENCE [LARGE SCALE GENOMIC DNA]</scope>
    <source>
        <strain>NZ131</strain>
    </source>
</reference>
<sequence length="388" mass="42566">MRYLTAGESHGPSLTAIIEGIPAGLTLHPADIDHELQRRQGGYGRGARMSIETDRVQISSGVRHGKTTGAPITLTVINKDHQKWLDVMAVGDIEETLKLKRRVKHPRPGHADLVGGIKYHFNDLRDALERSSARETTMRVAVGAVAKRILAELGIDMLHHILIFGGITITIPSKLSFRELQERALHSELSIVNPKQEEEIKTYIDKIKKEGDTIGGIIETIVQGVPAGLGSYVQWDKKLDAKLAQAVLSINAFKGVEFGVGFDMGFQKGSQVMDEITWTPTQGYGRQTNHLGGFEGGMTTGQPIVVKGVMKPIPTLYKPLMSVDIDSHEPYKATVERSDPTALPAAGVIMENVVATVLAKEILETFSSTTMSELQKAFSDYRAYVKQF</sequence>
<accession>B5XKU4</accession>
<comment type="function">
    <text evidence="1">Catalyzes the anti-1,4-elimination of the C-3 phosphate and the C-6 proR hydrogen from 5-enolpyruvylshikimate-3-phosphate (EPSP) to yield chorismate, which is the branch point compound that serves as the starting substrate for the three terminal pathways of aromatic amino acid biosynthesis. This reaction introduces a second double bond into the aromatic ring system.</text>
</comment>
<comment type="catalytic activity">
    <reaction evidence="1">
        <text>5-O-(1-carboxyvinyl)-3-phosphoshikimate = chorismate + phosphate</text>
        <dbReference type="Rhea" id="RHEA:21020"/>
        <dbReference type="ChEBI" id="CHEBI:29748"/>
        <dbReference type="ChEBI" id="CHEBI:43474"/>
        <dbReference type="ChEBI" id="CHEBI:57701"/>
        <dbReference type="EC" id="4.2.3.5"/>
    </reaction>
</comment>
<comment type="cofactor">
    <cofactor evidence="1">
        <name>FMNH2</name>
        <dbReference type="ChEBI" id="CHEBI:57618"/>
    </cofactor>
    <text evidence="1">Reduced FMN (FMNH(2)).</text>
</comment>
<comment type="pathway">
    <text evidence="1">Metabolic intermediate biosynthesis; chorismate biosynthesis; chorismate from D-erythrose 4-phosphate and phosphoenolpyruvate: step 7/7.</text>
</comment>
<comment type="subunit">
    <text evidence="1">Homotetramer.</text>
</comment>
<comment type="similarity">
    <text evidence="1">Belongs to the chorismate synthase family.</text>
</comment>
<gene>
    <name evidence="1" type="primary">aroC</name>
    <name type="ordered locus">Spy49_0635</name>
</gene>